<dbReference type="EC" id="3.2.2.27" evidence="1"/>
<dbReference type="EMBL" id="AP006841">
    <property type="protein sequence ID" value="BAD50558.1"/>
    <property type="molecule type" value="Genomic_DNA"/>
</dbReference>
<dbReference type="RefSeq" id="YP_101092.1">
    <property type="nucleotide sequence ID" value="NC_006347.1"/>
</dbReference>
<dbReference type="SMR" id="Q64PM3"/>
<dbReference type="STRING" id="295405.BF3816"/>
<dbReference type="KEGG" id="bfr:BF3816"/>
<dbReference type="PATRIC" id="fig|295405.11.peg.3664"/>
<dbReference type="HOGENOM" id="CLU_032162_3_0_10"/>
<dbReference type="OrthoDB" id="9804372at2"/>
<dbReference type="Proteomes" id="UP000002197">
    <property type="component" value="Chromosome"/>
</dbReference>
<dbReference type="GO" id="GO:0005737">
    <property type="term" value="C:cytoplasm"/>
    <property type="evidence" value="ECO:0007669"/>
    <property type="project" value="UniProtKB-SubCell"/>
</dbReference>
<dbReference type="GO" id="GO:0004844">
    <property type="term" value="F:uracil DNA N-glycosylase activity"/>
    <property type="evidence" value="ECO:0007669"/>
    <property type="project" value="UniProtKB-UniRule"/>
</dbReference>
<dbReference type="GO" id="GO:0097510">
    <property type="term" value="P:base-excision repair, AP site formation via deaminated base removal"/>
    <property type="evidence" value="ECO:0007669"/>
    <property type="project" value="TreeGrafter"/>
</dbReference>
<dbReference type="CDD" id="cd10027">
    <property type="entry name" value="UDG-F1-like"/>
    <property type="match status" value="1"/>
</dbReference>
<dbReference type="FunFam" id="3.40.470.10:FF:000001">
    <property type="entry name" value="Uracil-DNA glycosylase"/>
    <property type="match status" value="1"/>
</dbReference>
<dbReference type="Gene3D" id="3.40.470.10">
    <property type="entry name" value="Uracil-DNA glycosylase-like domain"/>
    <property type="match status" value="1"/>
</dbReference>
<dbReference type="HAMAP" id="MF_00148">
    <property type="entry name" value="UDG"/>
    <property type="match status" value="1"/>
</dbReference>
<dbReference type="InterPro" id="IPR002043">
    <property type="entry name" value="UDG_fam1"/>
</dbReference>
<dbReference type="InterPro" id="IPR018085">
    <property type="entry name" value="Ura-DNA_Glyclase_AS"/>
</dbReference>
<dbReference type="InterPro" id="IPR005122">
    <property type="entry name" value="Uracil-DNA_glycosylase-like"/>
</dbReference>
<dbReference type="InterPro" id="IPR036895">
    <property type="entry name" value="Uracil-DNA_glycosylase-like_sf"/>
</dbReference>
<dbReference type="NCBIfam" id="NF003588">
    <property type="entry name" value="PRK05254.1-1"/>
    <property type="match status" value="1"/>
</dbReference>
<dbReference type="NCBIfam" id="NF003589">
    <property type="entry name" value="PRK05254.1-2"/>
    <property type="match status" value="1"/>
</dbReference>
<dbReference type="NCBIfam" id="NF003591">
    <property type="entry name" value="PRK05254.1-4"/>
    <property type="match status" value="1"/>
</dbReference>
<dbReference type="NCBIfam" id="NF003592">
    <property type="entry name" value="PRK05254.1-5"/>
    <property type="match status" value="1"/>
</dbReference>
<dbReference type="NCBIfam" id="TIGR00628">
    <property type="entry name" value="ung"/>
    <property type="match status" value="1"/>
</dbReference>
<dbReference type="PANTHER" id="PTHR11264">
    <property type="entry name" value="URACIL-DNA GLYCOSYLASE"/>
    <property type="match status" value="1"/>
</dbReference>
<dbReference type="PANTHER" id="PTHR11264:SF0">
    <property type="entry name" value="URACIL-DNA GLYCOSYLASE"/>
    <property type="match status" value="1"/>
</dbReference>
<dbReference type="Pfam" id="PF03167">
    <property type="entry name" value="UDG"/>
    <property type="match status" value="1"/>
</dbReference>
<dbReference type="SMART" id="SM00986">
    <property type="entry name" value="UDG"/>
    <property type="match status" value="1"/>
</dbReference>
<dbReference type="SMART" id="SM00987">
    <property type="entry name" value="UreE_C"/>
    <property type="match status" value="1"/>
</dbReference>
<dbReference type="SUPFAM" id="SSF52141">
    <property type="entry name" value="Uracil-DNA glycosylase-like"/>
    <property type="match status" value="1"/>
</dbReference>
<dbReference type="PROSITE" id="PS00130">
    <property type="entry name" value="U_DNA_GLYCOSYLASE"/>
    <property type="match status" value="1"/>
</dbReference>
<proteinExistence type="inferred from homology"/>
<protein>
    <recommendedName>
        <fullName evidence="1">Uracil-DNA glycosylase 2</fullName>
        <shortName evidence="1">UDG 2</shortName>
        <ecNumber evidence="1">3.2.2.27</ecNumber>
    </recommendedName>
</protein>
<evidence type="ECO:0000255" key="1">
    <source>
        <dbReference type="HAMAP-Rule" id="MF_00148"/>
    </source>
</evidence>
<comment type="function">
    <text evidence="1">Excises uracil residues from the DNA which can arise as a result of misincorporation of dUMP residues by DNA polymerase or due to deamination of cytosine.</text>
</comment>
<comment type="catalytic activity">
    <reaction evidence="1">
        <text>Hydrolyzes single-stranded DNA or mismatched double-stranded DNA and polynucleotides, releasing free uracil.</text>
        <dbReference type="EC" id="3.2.2.27"/>
    </reaction>
</comment>
<comment type="subcellular location">
    <subcellularLocation>
        <location evidence="1">Cytoplasm</location>
    </subcellularLocation>
</comment>
<comment type="similarity">
    <text evidence="1">Belongs to the uracil-DNA glycosylase (UDG) superfamily. UNG family.</text>
</comment>
<feature type="chain" id="PRO_0000176062" description="Uracil-DNA glycosylase 2">
    <location>
        <begin position="1"/>
        <end position="220"/>
    </location>
</feature>
<feature type="active site" description="Proton acceptor" evidence="1">
    <location>
        <position position="65"/>
    </location>
</feature>
<gene>
    <name evidence="1" type="primary">ung2</name>
    <name type="ordered locus">BF3816</name>
</gene>
<organism>
    <name type="scientific">Bacteroides fragilis (strain YCH46)</name>
    <dbReference type="NCBI Taxonomy" id="295405"/>
    <lineage>
        <taxon>Bacteria</taxon>
        <taxon>Pseudomonadati</taxon>
        <taxon>Bacteroidota</taxon>
        <taxon>Bacteroidia</taxon>
        <taxon>Bacteroidales</taxon>
        <taxon>Bacteroidaceae</taxon>
        <taxon>Bacteroides</taxon>
    </lineage>
</organism>
<accession>Q64PM3</accession>
<name>UNG2_BACFR</name>
<sequence length="220" mass="24998">MNVQIEESWKTHLEPEFEKDYFRTLTEFVRSEYSQYQIFPPGKLIFNAFNLCPFDKVKVVIIGQDPYHGPGQAHGLCFSVNDGVAFPPSLVNIFKEIKEDIGTPAPSTGNLTRWAEQGVLLLNATLTVRAHQAGSHQRRGWEEFTDAAIRVLAEERENLVFILWGSYAQKKGAFIDRNKHLVLSSAHPSPLSAYNGFFGNKHFSKTNEYLKAHGKTEINW</sequence>
<keyword id="KW-0963">Cytoplasm</keyword>
<keyword id="KW-0227">DNA damage</keyword>
<keyword id="KW-0234">DNA repair</keyword>
<keyword id="KW-0378">Hydrolase</keyword>
<reference key="1">
    <citation type="journal article" date="2004" name="Proc. Natl. Acad. Sci. U.S.A.">
        <title>Genomic analysis of Bacteroides fragilis reveals extensive DNA inversions regulating cell surface adaptation.</title>
        <authorList>
            <person name="Kuwahara T."/>
            <person name="Yamashita A."/>
            <person name="Hirakawa H."/>
            <person name="Nakayama H."/>
            <person name="Toh H."/>
            <person name="Okada N."/>
            <person name="Kuhara S."/>
            <person name="Hattori M."/>
            <person name="Hayashi T."/>
            <person name="Ohnishi Y."/>
        </authorList>
    </citation>
    <scope>NUCLEOTIDE SEQUENCE [LARGE SCALE GENOMIC DNA]</scope>
    <source>
        <strain>YCH46</strain>
    </source>
</reference>